<comment type="function">
    <molecule>CLE1-1</molecule>
    <text evidence="6 7">Mimics host plant CLE extracellular signal peptides that regulate cell fate. May play a role in the differentiation or division of feeding cells (syncytia) induced in plant roots during infection.</text>
</comment>
<comment type="subcellular location">
    <molecule>CLE1-1</molecule>
    <subcellularLocation>
        <location evidence="2">Secreted</location>
    </subcellularLocation>
    <subcellularLocation>
        <location evidence="2">Host cytoplasm</location>
    </subcellularLocation>
    <subcellularLocation>
        <location evidence="2">Host extracellular space</location>
    </subcellularLocation>
    <subcellularLocation>
        <location evidence="2">Secreted</location>
        <location evidence="2">Extracellular space</location>
        <location evidence="2">Apoplast</location>
    </subcellularLocation>
    <text evidence="2">Present in secretory granules within the dorsal esophageal gland secretory cell and in the dorsal gland ampulla (collecting reservoir) at the base of the nematode stylet. Secreted into host root cells via the nematode stylet to transform the recipient cells into enlarged multinucleate feeding cells called giant-cells or syncytia. Secreted from the host cytoplasm to the host apoplasm via a plant secretory pathway.</text>
</comment>
<comment type="tissue specificity">
    <text evidence="6">Highly expressed exclusively within the dorsal esophageal gland cell during syncytium formation in host plants.</text>
</comment>
<comment type="developmental stage">
    <text evidence="6">Strongly up-regulated during root colonization, from the onset of syncytium formation by parasitic second-stage juveniles (pJ2) through the J3?J4 molts of sedentary life stages that become adult females.</text>
</comment>
<comment type="PTM">
    <text evidence="7">Preprocessing of the precursor by host proteases leads first to the production of 21-mer CLE-containing peptides (Arg-130 to Lys-150, Arg-151 to Lys-171 and Arg-172 to Lys-192) followed by an ultimate C-term trimming to give the mature 12-mer CLE1-1 peptide.</text>
</comment>
<comment type="similarity">
    <text evidence="9">Belongs to the CLV3/ESR signal peptide family.</text>
</comment>
<feature type="signal peptide" evidence="3">
    <location>
        <begin position="1"/>
        <end position="21"/>
    </location>
</feature>
<feature type="chain" id="PRO_5000539258" description="CLAVATA3/ESR (CLE)-related protein 1" evidence="3">
    <location>
        <begin position="22"/>
        <end position="204"/>
    </location>
</feature>
<feature type="peptide" id="PRO_0000443331" description="CLE1-1" evidence="7">
    <location>
        <begin position="130"/>
        <end position="141"/>
    </location>
</feature>
<feature type="propeptide" id="PRO_0000443332" description="Removed in mature form" evidence="7">
    <location>
        <begin position="142"/>
        <end position="150"/>
    </location>
</feature>
<feature type="peptide" id="PRO_0000443333" description="CLE1-1" evidence="7">
    <location>
        <begin position="151"/>
        <end position="162"/>
    </location>
</feature>
<feature type="propeptide" id="PRO_0000443334" description="Removed in mature form" evidence="7">
    <location>
        <begin position="163"/>
        <end position="171"/>
    </location>
</feature>
<feature type="peptide" id="PRO_0000443335" description="CLE1-1" evidence="7">
    <location>
        <begin position="172"/>
        <end position="183"/>
    </location>
</feature>
<feature type="propeptide" id="PRO_0000443336" description="Removed in mature form" evidence="7">
    <location>
        <begin position="184"/>
        <end position="192"/>
    </location>
</feature>
<feature type="region of interest" description="Required for secretion from the host cytoplasm to the host apoplasm" evidence="1">
    <location>
        <begin position="21"/>
        <end position="83"/>
    </location>
</feature>
<feature type="region of interest" description="Disordered" evidence="5">
    <location>
        <begin position="116"/>
        <end position="204"/>
    </location>
</feature>
<feature type="compositionally biased region" description="Basic and acidic residues" evidence="5">
    <location>
        <begin position="139"/>
        <end position="151"/>
    </location>
</feature>
<feature type="compositionally biased region" description="Basic and acidic residues" evidence="5">
    <location>
        <begin position="160"/>
        <end position="172"/>
    </location>
</feature>
<feature type="compositionally biased region" description="Basic and acidic residues" evidence="5">
    <location>
        <begin position="181"/>
        <end position="193"/>
    </location>
</feature>
<feature type="glycosylation site" description="N-linked (GlcNAc...) asparagine" evidence="4">
    <location>
        <position position="32"/>
    </location>
</feature>
<keyword id="KW-0052">Apoplast</keyword>
<keyword id="KW-0221">Differentiation</keyword>
<keyword id="KW-0325">Glycoprotein</keyword>
<keyword id="KW-1035">Host cytoplasm</keyword>
<keyword id="KW-1185">Reference proteome</keyword>
<keyword id="KW-0677">Repeat</keyword>
<keyword id="KW-0964">Secreted</keyword>
<keyword id="KW-0732">Signal</keyword>
<organism>
    <name type="scientific">Globodera rostochiensis</name>
    <name type="common">Golden nematode worm</name>
    <name type="synonym">Heterodera rostochiensis</name>
    <dbReference type="NCBI Taxonomy" id="31243"/>
    <lineage>
        <taxon>Eukaryota</taxon>
        <taxon>Metazoa</taxon>
        <taxon>Ecdysozoa</taxon>
        <taxon>Nematoda</taxon>
        <taxon>Chromadorea</taxon>
        <taxon>Rhabditida</taxon>
        <taxon>Tylenchina</taxon>
        <taxon>Tylenchomorpha</taxon>
        <taxon>Tylenchoidea</taxon>
        <taxon>Heteroderidae</taxon>
        <taxon>Heteroderinae</taxon>
        <taxon>Globodera</taxon>
    </lineage>
</organism>
<proteinExistence type="evidence at protein level"/>
<protein>
    <recommendedName>
        <fullName evidence="8">CLAVATA3/ESR (CLE)-related protein 1</fullName>
    </recommendedName>
    <component>
        <recommendedName>
            <fullName evidence="8">CLE1-1</fullName>
        </recommendedName>
    </component>
</protein>
<sequence>MAKNAMLCLLILSVVLALAFATNEKDDKEAGNLSTGIFGKAGRFVTVALAMSSRLGGAGASQGGGAVHGESLKSNQLQNAYRMALPPPMQIKSAEIDGWKPSPDEYLKKFAQEFRRNTGMKPQSYNEEKRVTPGGPDPLHNREKILEEQKRVTPGGPDPLHNREKTLEEQKRVTPGGPDPLHNREKTLEEQKRVTPGVPDRQHR</sequence>
<name>CLE1_GLORO</name>
<gene>
    <name evidence="8" type="primary">CLE-1</name>
</gene>
<dbReference type="EMBL" id="EU386829">
    <property type="protein sequence ID" value="ACY70448.1"/>
    <property type="molecule type" value="mRNA"/>
</dbReference>
<dbReference type="EMBL" id="EU386830">
    <property type="protein sequence ID" value="ACY70449.1"/>
    <property type="molecule type" value="Genomic_DNA"/>
</dbReference>
<dbReference type="SMR" id="D1FNJ7"/>
<dbReference type="GlyCosmos" id="D1FNJ7">
    <property type="glycosylation" value="1 site, No reported glycans"/>
</dbReference>
<dbReference type="Proteomes" id="UP000887572">
    <property type="component" value="Unplaced"/>
</dbReference>
<dbReference type="GO" id="GO:0005576">
    <property type="term" value="C:extracellular region"/>
    <property type="evidence" value="ECO:0007669"/>
    <property type="project" value="UniProtKB-SubCell"/>
</dbReference>
<dbReference type="GO" id="GO:0030430">
    <property type="term" value="C:host cell cytoplasm"/>
    <property type="evidence" value="ECO:0007669"/>
    <property type="project" value="UniProtKB-SubCell"/>
</dbReference>
<dbReference type="GO" id="GO:0043655">
    <property type="term" value="C:host extracellular space"/>
    <property type="evidence" value="ECO:0007669"/>
    <property type="project" value="UniProtKB-SubCell"/>
</dbReference>
<dbReference type="GO" id="GO:0030154">
    <property type="term" value="P:cell differentiation"/>
    <property type="evidence" value="ECO:0007669"/>
    <property type="project" value="UniProtKB-KW"/>
</dbReference>
<dbReference type="PANTHER" id="PTHR36705">
    <property type="entry name" value="CLAVATA3/ESR (CLE)-RELATED PROTEIN 20"/>
    <property type="match status" value="1"/>
</dbReference>
<dbReference type="PANTHER" id="PTHR36705:SF12">
    <property type="entry name" value="CLAVATA3_ESR (CLE)-RELATED PROTEIN 20"/>
    <property type="match status" value="1"/>
</dbReference>
<reference key="1">
    <citation type="journal article" date="2009" name="Mol. Plant Microbe Interact.">
        <title>Structural and functional diversity of CLAVATA3/ESR (CLE)-like genes from the potato cyst nematode Globodera rostochiensis.</title>
        <authorList>
            <person name="Lu S.-W."/>
            <person name="Chen S."/>
            <person name="Wang J."/>
            <person name="Yu H."/>
            <person name="Chronis D."/>
            <person name="Mitchum M.G."/>
            <person name="Wang X."/>
        </authorList>
    </citation>
    <scope>NUCLEOTIDE SEQUENCE [GENOMIC DNA / MRNA]</scope>
    <scope>FUNCTION</scope>
    <scope>TISSUE SPECIFICITY</scope>
    <scope>DEVELOPMENTAL STAGE</scope>
</reference>
<reference key="2">
    <citation type="journal article" date="2011" name="Plant Physiol.">
        <title>Mechanisms of molecular mimicry of plant CLE peptide ligands by the parasitic nematode Globodera rostochiensis.</title>
        <authorList>
            <person name="Guo Y."/>
            <person name="Ni J."/>
            <person name="Denver R."/>
            <person name="Wang X."/>
            <person name="Clark S.E."/>
        </authorList>
    </citation>
    <scope>FUNCTION</scope>
    <scope>PROTEOLYTIC PROCESSING</scope>
    <scope>IDENTIFICATION BY MASS SPECTROMETRY</scope>
</reference>
<evidence type="ECO:0000250" key="1"/>
<evidence type="ECO:0000250" key="2">
    <source>
        <dbReference type="UniProtKB" id="Q9BN21"/>
    </source>
</evidence>
<evidence type="ECO:0000255" key="3"/>
<evidence type="ECO:0000255" key="4">
    <source>
        <dbReference type="PROSITE-ProRule" id="PRU00498"/>
    </source>
</evidence>
<evidence type="ECO:0000256" key="5">
    <source>
        <dbReference type="SAM" id="MobiDB-lite"/>
    </source>
</evidence>
<evidence type="ECO:0000269" key="6">
    <source>
    </source>
</evidence>
<evidence type="ECO:0000269" key="7">
    <source>
    </source>
</evidence>
<evidence type="ECO:0000303" key="8">
    <source>
    </source>
</evidence>
<evidence type="ECO:0000305" key="9"/>
<accession>D1FNJ7</accession>